<accession>P80026</accession>
<organism>
    <name type="scientific">Gallus gallus</name>
    <name type="common">Chicken</name>
    <dbReference type="NCBI Taxonomy" id="9031"/>
    <lineage>
        <taxon>Eukaryota</taxon>
        <taxon>Metazoa</taxon>
        <taxon>Chordata</taxon>
        <taxon>Craniata</taxon>
        <taxon>Vertebrata</taxon>
        <taxon>Euteleostomi</taxon>
        <taxon>Archelosauria</taxon>
        <taxon>Archosauria</taxon>
        <taxon>Dinosauria</taxon>
        <taxon>Saurischia</taxon>
        <taxon>Theropoda</taxon>
        <taxon>Coelurosauria</taxon>
        <taxon>Aves</taxon>
        <taxon>Neognathae</taxon>
        <taxon>Galloanserae</taxon>
        <taxon>Galliformes</taxon>
        <taxon>Phasianidae</taxon>
        <taxon>Phasianinae</taxon>
        <taxon>Gallus</taxon>
    </lineage>
</organism>
<comment type="function">
    <text evidence="1">In muscle, parvalbumin is thought to be involved in relaxation after contraction. It binds two calcium ions (By similarity).</text>
</comment>
<comment type="miscellaneous">
    <text>This parvalbumin has an isoelectric point of 5.2.</text>
</comment>
<comment type="similarity">
    <text evidence="4">Belongs to the parvalbumin family.</text>
</comment>
<keyword id="KW-0007">Acetylation</keyword>
<keyword id="KW-0106">Calcium</keyword>
<keyword id="KW-0903">Direct protein sequencing</keyword>
<keyword id="KW-0479">Metal-binding</keyword>
<keyword id="KW-0514">Muscle protein</keyword>
<keyword id="KW-1185">Reference proteome</keyword>
<keyword id="KW-0677">Repeat</keyword>
<protein>
    <recommendedName>
        <fullName>Parvalbumin, muscle</fullName>
    </recommendedName>
</protein>
<proteinExistence type="evidence at protein level"/>
<reference key="1">
    <citation type="journal article" date="1991" name="Biochemistry">
        <title>Parvalbumin isoforms in chicken muscle and thymus. Amino acid sequence analysis of muscle parvalbumin by tandem mass spectrometry.</title>
        <authorList>
            <person name="Kuster T."/>
            <person name="Staudenmann W."/>
            <person name="Hughes G.J."/>
            <person name="Heizmann C.W."/>
        </authorList>
    </citation>
    <scope>PROTEIN SEQUENCE</scope>
    <scope>ACETYLATION AT ALA-1</scope>
</reference>
<reference key="2">
    <citation type="journal article" date="1991" name="Biochem. Biophys. Res. Commun.">
        <title>Comparison of the amino acid sequences of tissue-specific parvalbumins from chicken muscle and thymus and possible evolutionary significance.</title>
        <authorList>
            <person name="Brewer J.M."/>
            <person name="Arnold J."/>
            <person name="Beach G.G."/>
            <person name="Ragland W.L."/>
            <person name="Wunderlich J.K."/>
        </authorList>
    </citation>
    <scope>PROTEIN SEQUENCE</scope>
</reference>
<reference key="3">
    <citation type="journal article" date="1991" name="Biochem. Biophys. Res. Commun.">
        <title>Avian thymic hormone and chicken (muscle) parvalbumin are distinct proteins: isolation of a muscle parvalbumin cDNA fragment by PCR.</title>
        <authorList>
            <person name="Palmisano W.A."/>
            <person name="Henzl M.T."/>
        </authorList>
    </citation>
    <scope>NUCLEOTIDE SEQUENCE [MRNA] OF 57-101</scope>
</reference>
<dbReference type="EMBL" id="M65068">
    <property type="protein sequence ID" value="AAA49004.1"/>
    <property type="molecule type" value="mRNA"/>
</dbReference>
<dbReference type="PIR" id="JT0973">
    <property type="entry name" value="PVCHA"/>
</dbReference>
<dbReference type="SMR" id="P80026"/>
<dbReference type="BioGRID" id="676708">
    <property type="interactions" value="1"/>
</dbReference>
<dbReference type="FunCoup" id="P80026">
    <property type="interactions" value="57"/>
</dbReference>
<dbReference type="IntAct" id="P80026">
    <property type="interactions" value="1"/>
</dbReference>
<dbReference type="STRING" id="9031.ENSGALP00000047809"/>
<dbReference type="Allergome" id="6107">
    <property type="allergen name" value="Gal d 8"/>
</dbReference>
<dbReference type="iPTMnet" id="P80026"/>
<dbReference type="PaxDb" id="9031-ENSGALP00000020426"/>
<dbReference type="VEuPathDB" id="HostDB:geneid_396459"/>
<dbReference type="eggNOG" id="KOG0027">
    <property type="taxonomic scope" value="Eukaryota"/>
</dbReference>
<dbReference type="HOGENOM" id="CLU_157356_0_0_1"/>
<dbReference type="InParanoid" id="P80026"/>
<dbReference type="OMA" id="HRKFFQM"/>
<dbReference type="PRO" id="PR:P80026"/>
<dbReference type="Proteomes" id="UP000000539">
    <property type="component" value="Unassembled WGS sequence"/>
</dbReference>
<dbReference type="GO" id="GO:0005737">
    <property type="term" value="C:cytoplasm"/>
    <property type="evidence" value="ECO:0000318"/>
    <property type="project" value="GO_Central"/>
</dbReference>
<dbReference type="GO" id="GO:0005509">
    <property type="term" value="F:calcium ion binding"/>
    <property type="evidence" value="ECO:0000318"/>
    <property type="project" value="GO_Central"/>
</dbReference>
<dbReference type="CDD" id="cd16254">
    <property type="entry name" value="EFh_parvalbumin_alpha"/>
    <property type="match status" value="1"/>
</dbReference>
<dbReference type="FunFam" id="1.10.238.10:FF:000060">
    <property type="entry name" value="Parvalbumin, thymic"/>
    <property type="match status" value="1"/>
</dbReference>
<dbReference type="Gene3D" id="1.10.238.10">
    <property type="entry name" value="EF-hand"/>
    <property type="match status" value="1"/>
</dbReference>
<dbReference type="InterPro" id="IPR011992">
    <property type="entry name" value="EF-hand-dom_pair"/>
</dbReference>
<dbReference type="InterPro" id="IPR018247">
    <property type="entry name" value="EF_Hand_1_Ca_BS"/>
</dbReference>
<dbReference type="InterPro" id="IPR002048">
    <property type="entry name" value="EF_hand_dom"/>
</dbReference>
<dbReference type="InterPro" id="IPR008080">
    <property type="entry name" value="Parvalbumin"/>
</dbReference>
<dbReference type="PANTHER" id="PTHR11653">
    <property type="entry name" value="PARVALBUMIN ALPHA"/>
    <property type="match status" value="1"/>
</dbReference>
<dbReference type="PANTHER" id="PTHR11653:SF2">
    <property type="entry name" value="PARVALBUMIN ALPHA"/>
    <property type="match status" value="1"/>
</dbReference>
<dbReference type="Pfam" id="PF13499">
    <property type="entry name" value="EF-hand_7"/>
    <property type="match status" value="1"/>
</dbReference>
<dbReference type="PRINTS" id="PR01697">
    <property type="entry name" value="PARVALBUMIN"/>
</dbReference>
<dbReference type="SMART" id="SM00054">
    <property type="entry name" value="EFh"/>
    <property type="match status" value="2"/>
</dbReference>
<dbReference type="SUPFAM" id="SSF47473">
    <property type="entry name" value="EF-hand"/>
    <property type="match status" value="1"/>
</dbReference>
<dbReference type="PROSITE" id="PS00018">
    <property type="entry name" value="EF_HAND_1"/>
    <property type="match status" value="2"/>
</dbReference>
<dbReference type="PROSITE" id="PS50222">
    <property type="entry name" value="EF_HAND_2"/>
    <property type="match status" value="2"/>
</dbReference>
<sequence length="109" mass="11942">AMTDVLSAEDIKKAVGAFSAAESFNYKKFFEMVGLKKKSPEDVKKVFHILDKDRSGFIEEEELKFVLKGFTPDGRDLSDKETKALLAAGDKDGDGKIGADEFATMVAES</sequence>
<name>PRVM_CHICK</name>
<feature type="chain" id="PRO_0000073625" description="Parvalbumin, muscle">
    <location>
        <begin position="1"/>
        <end position="109"/>
    </location>
</feature>
<feature type="domain" description="EF-hand 1" evidence="2">
    <location>
        <begin position="38"/>
        <end position="73"/>
    </location>
</feature>
<feature type="domain" description="EF-hand 2" evidence="2">
    <location>
        <begin position="77"/>
        <end position="109"/>
    </location>
</feature>
<feature type="binding site" evidence="2">
    <location>
        <position position="51"/>
    </location>
    <ligand>
        <name>Ca(2+)</name>
        <dbReference type="ChEBI" id="CHEBI:29108"/>
        <label>1</label>
    </ligand>
</feature>
<feature type="binding site" evidence="2">
    <location>
        <position position="53"/>
    </location>
    <ligand>
        <name>Ca(2+)</name>
        <dbReference type="ChEBI" id="CHEBI:29108"/>
        <label>1</label>
    </ligand>
</feature>
<feature type="binding site" evidence="2">
    <location>
        <position position="55"/>
    </location>
    <ligand>
        <name>Ca(2+)</name>
        <dbReference type="ChEBI" id="CHEBI:29108"/>
        <label>1</label>
    </ligand>
</feature>
<feature type="binding site" evidence="2">
    <location>
        <position position="62"/>
    </location>
    <ligand>
        <name>Ca(2+)</name>
        <dbReference type="ChEBI" id="CHEBI:29108"/>
        <label>1</label>
    </ligand>
</feature>
<feature type="binding site" evidence="2">
    <location>
        <position position="90"/>
    </location>
    <ligand>
        <name>Ca(2+)</name>
        <dbReference type="ChEBI" id="CHEBI:29108"/>
        <label>2</label>
    </ligand>
</feature>
<feature type="binding site" evidence="2">
    <location>
        <position position="92"/>
    </location>
    <ligand>
        <name>Ca(2+)</name>
        <dbReference type="ChEBI" id="CHEBI:29108"/>
        <label>2</label>
    </ligand>
</feature>
<feature type="binding site" evidence="2">
    <location>
        <position position="94"/>
    </location>
    <ligand>
        <name>Ca(2+)</name>
        <dbReference type="ChEBI" id="CHEBI:29108"/>
        <label>2</label>
    </ligand>
</feature>
<feature type="binding site" evidence="2">
    <location>
        <position position="96"/>
    </location>
    <ligand>
        <name>Ca(2+)</name>
        <dbReference type="ChEBI" id="CHEBI:29108"/>
        <label>2</label>
    </ligand>
</feature>
<feature type="binding site" evidence="2">
    <location>
        <position position="101"/>
    </location>
    <ligand>
        <name>Ca(2+)</name>
        <dbReference type="ChEBI" id="CHEBI:29108"/>
        <label>2</label>
    </ligand>
</feature>
<feature type="modified residue" description="N-acetylalanine" evidence="3">
    <location>
        <position position="1"/>
    </location>
</feature>
<feature type="sequence conflict" description="In Ref. 3; AAA49004." evidence="4" ref="3">
    <original>E</original>
    <variation>D</variation>
    <location>
        <position position="61"/>
    </location>
</feature>
<feature type="sequence conflict" description="In Ref. 3; AAA49004." evidence="4" ref="3">
    <original>ADE</original>
    <variation>VEK</variation>
    <location>
        <begin position="99"/>
        <end position="101"/>
    </location>
</feature>
<evidence type="ECO:0000250" key="1"/>
<evidence type="ECO:0000255" key="2">
    <source>
        <dbReference type="PROSITE-ProRule" id="PRU00448"/>
    </source>
</evidence>
<evidence type="ECO:0000269" key="3">
    <source>
    </source>
</evidence>
<evidence type="ECO:0000305" key="4"/>